<keyword id="KW-0028">Amino-acid biosynthesis</keyword>
<keyword id="KW-0055">Arginine biosynthesis</keyword>
<keyword id="KW-0067">ATP-binding</keyword>
<keyword id="KW-0963">Cytoplasm</keyword>
<keyword id="KW-0418">Kinase</keyword>
<keyword id="KW-0547">Nucleotide-binding</keyword>
<keyword id="KW-1185">Reference proteome</keyword>
<keyword id="KW-0808">Transferase</keyword>
<sequence>MSKAMNADNPEPATKSVAAIAPSLKAEILAEALPYIRKFHGKTIVVKYGGNAMTEEKLKHGFARDVILLKLVGMNPVVVHGGGPQIDEALKKVGKVGTFIQGMRVTDEETMEVVEWVLGGEVQQDIVMLINQYGGQAVGLTGKDGGLIRAKRLQMPDRENPGTFIDIGYVGDIEAINPAVVKALQDDAFIPVISPIGFSDDGQAYNINADVVAGKMAEILKAEKLVMMTNIPGVMDKKGNLLTDLSAREIEELFADGTISGGMLPKISSALDAAKSGVHSVHIIDGRIEHSLLLEILTEQAFGTMIRSH</sequence>
<proteinExistence type="inferred from homology"/>
<reference key="1">
    <citation type="journal article" date="2010" name="PLoS ONE">
        <title>The complete genome sequence of Cupriavidus metallidurans strain CH34, a master survivalist in harsh and anthropogenic environments.</title>
        <authorList>
            <person name="Janssen P.J."/>
            <person name="Van Houdt R."/>
            <person name="Moors H."/>
            <person name="Monsieurs P."/>
            <person name="Morin N."/>
            <person name="Michaux A."/>
            <person name="Benotmane M.A."/>
            <person name="Leys N."/>
            <person name="Vallaeys T."/>
            <person name="Lapidus A."/>
            <person name="Monchy S."/>
            <person name="Medigue C."/>
            <person name="Taghavi S."/>
            <person name="McCorkle S."/>
            <person name="Dunn J."/>
            <person name="van der Lelie D."/>
            <person name="Mergeay M."/>
        </authorList>
    </citation>
    <scope>NUCLEOTIDE SEQUENCE [LARGE SCALE GENOMIC DNA]</scope>
    <source>
        <strain>ATCC 43123 / DSM 2839 / NBRC 102507 / CH34</strain>
    </source>
</reference>
<name>ARGB_CUPMC</name>
<protein>
    <recommendedName>
        <fullName evidence="1">Acetylglutamate kinase</fullName>
        <ecNumber evidence="1">2.7.2.8</ecNumber>
    </recommendedName>
    <alternativeName>
        <fullName evidence="1">N-acetyl-L-glutamate 5-phosphotransferase</fullName>
    </alternativeName>
    <alternativeName>
        <fullName evidence="1">NAG kinase</fullName>
        <shortName evidence="1">NAGK</shortName>
    </alternativeName>
</protein>
<gene>
    <name evidence="1" type="primary">argB</name>
    <name type="ordered locus">Rmet_0140</name>
</gene>
<accession>Q1LS50</accession>
<organism>
    <name type="scientific">Cupriavidus metallidurans (strain ATCC 43123 / DSM 2839 / NBRC 102507 / CH34)</name>
    <name type="common">Ralstonia metallidurans</name>
    <dbReference type="NCBI Taxonomy" id="266264"/>
    <lineage>
        <taxon>Bacteria</taxon>
        <taxon>Pseudomonadati</taxon>
        <taxon>Pseudomonadota</taxon>
        <taxon>Betaproteobacteria</taxon>
        <taxon>Burkholderiales</taxon>
        <taxon>Burkholderiaceae</taxon>
        <taxon>Cupriavidus</taxon>
    </lineage>
</organism>
<feature type="chain" id="PRO_0000264741" description="Acetylglutamate kinase">
    <location>
        <begin position="1"/>
        <end position="309"/>
    </location>
</feature>
<feature type="binding site" evidence="1">
    <location>
        <begin position="82"/>
        <end position="83"/>
    </location>
    <ligand>
        <name>substrate</name>
    </ligand>
</feature>
<feature type="binding site" evidence="1">
    <location>
        <position position="104"/>
    </location>
    <ligand>
        <name>substrate</name>
    </ligand>
</feature>
<feature type="binding site" evidence="1">
    <location>
        <position position="206"/>
    </location>
    <ligand>
        <name>substrate</name>
    </ligand>
</feature>
<feature type="site" description="Transition state stabilizer" evidence="1">
    <location>
        <position position="47"/>
    </location>
</feature>
<feature type="site" description="Transition state stabilizer" evidence="1">
    <location>
        <position position="266"/>
    </location>
</feature>
<comment type="function">
    <text evidence="1">Catalyzes the ATP-dependent phosphorylation of N-acetyl-L-glutamate.</text>
</comment>
<comment type="catalytic activity">
    <reaction evidence="1">
        <text>N-acetyl-L-glutamate + ATP = N-acetyl-L-glutamyl 5-phosphate + ADP</text>
        <dbReference type="Rhea" id="RHEA:14629"/>
        <dbReference type="ChEBI" id="CHEBI:30616"/>
        <dbReference type="ChEBI" id="CHEBI:44337"/>
        <dbReference type="ChEBI" id="CHEBI:57936"/>
        <dbReference type="ChEBI" id="CHEBI:456216"/>
        <dbReference type="EC" id="2.7.2.8"/>
    </reaction>
</comment>
<comment type="pathway">
    <text evidence="1">Amino-acid biosynthesis; L-arginine biosynthesis; N(2)-acetyl-L-ornithine from L-glutamate: step 2/4.</text>
</comment>
<comment type="subcellular location">
    <subcellularLocation>
        <location evidence="1">Cytoplasm</location>
    </subcellularLocation>
</comment>
<comment type="similarity">
    <text evidence="1">Belongs to the acetylglutamate kinase family. ArgB subfamily.</text>
</comment>
<comment type="sequence caution" evidence="2">
    <conflict type="erroneous initiation">
        <sequence resource="EMBL-CDS" id="ABF07026"/>
    </conflict>
</comment>
<evidence type="ECO:0000255" key="1">
    <source>
        <dbReference type="HAMAP-Rule" id="MF_00082"/>
    </source>
</evidence>
<evidence type="ECO:0000305" key="2"/>
<dbReference type="EC" id="2.7.2.8" evidence="1"/>
<dbReference type="EMBL" id="CP000352">
    <property type="protein sequence ID" value="ABF07026.1"/>
    <property type="status" value="ALT_INIT"/>
    <property type="molecule type" value="Genomic_DNA"/>
</dbReference>
<dbReference type="SMR" id="Q1LS50"/>
<dbReference type="STRING" id="266264.Rmet_0140"/>
<dbReference type="KEGG" id="rme:Rmet_0140"/>
<dbReference type="eggNOG" id="COG0548">
    <property type="taxonomic scope" value="Bacteria"/>
</dbReference>
<dbReference type="HOGENOM" id="CLU_053680_0_0_4"/>
<dbReference type="UniPathway" id="UPA00068">
    <property type="reaction ID" value="UER00107"/>
</dbReference>
<dbReference type="Proteomes" id="UP000002429">
    <property type="component" value="Chromosome"/>
</dbReference>
<dbReference type="GO" id="GO:0005737">
    <property type="term" value="C:cytoplasm"/>
    <property type="evidence" value="ECO:0007669"/>
    <property type="project" value="UniProtKB-SubCell"/>
</dbReference>
<dbReference type="GO" id="GO:0003991">
    <property type="term" value="F:acetylglutamate kinase activity"/>
    <property type="evidence" value="ECO:0007669"/>
    <property type="project" value="UniProtKB-UniRule"/>
</dbReference>
<dbReference type="GO" id="GO:0005524">
    <property type="term" value="F:ATP binding"/>
    <property type="evidence" value="ECO:0007669"/>
    <property type="project" value="UniProtKB-UniRule"/>
</dbReference>
<dbReference type="GO" id="GO:0042450">
    <property type="term" value="P:arginine biosynthetic process via ornithine"/>
    <property type="evidence" value="ECO:0007669"/>
    <property type="project" value="UniProtKB-UniRule"/>
</dbReference>
<dbReference type="GO" id="GO:0006526">
    <property type="term" value="P:L-arginine biosynthetic process"/>
    <property type="evidence" value="ECO:0007669"/>
    <property type="project" value="UniProtKB-UniPathway"/>
</dbReference>
<dbReference type="CDD" id="cd04250">
    <property type="entry name" value="AAK_NAGK-C"/>
    <property type="match status" value="1"/>
</dbReference>
<dbReference type="FunFam" id="3.40.1160.10:FF:000004">
    <property type="entry name" value="Acetylglutamate kinase"/>
    <property type="match status" value="1"/>
</dbReference>
<dbReference type="Gene3D" id="3.40.1160.10">
    <property type="entry name" value="Acetylglutamate kinase-like"/>
    <property type="match status" value="1"/>
</dbReference>
<dbReference type="HAMAP" id="MF_00082">
    <property type="entry name" value="ArgB"/>
    <property type="match status" value="1"/>
</dbReference>
<dbReference type="InterPro" id="IPR036393">
    <property type="entry name" value="AceGlu_kinase-like_sf"/>
</dbReference>
<dbReference type="InterPro" id="IPR004662">
    <property type="entry name" value="AcgluKinase_fam"/>
</dbReference>
<dbReference type="InterPro" id="IPR037528">
    <property type="entry name" value="ArgB"/>
</dbReference>
<dbReference type="InterPro" id="IPR001048">
    <property type="entry name" value="Asp/Glu/Uridylate_kinase"/>
</dbReference>
<dbReference type="InterPro" id="IPR041727">
    <property type="entry name" value="NAGK-C"/>
</dbReference>
<dbReference type="NCBIfam" id="TIGR00761">
    <property type="entry name" value="argB"/>
    <property type="match status" value="1"/>
</dbReference>
<dbReference type="PANTHER" id="PTHR23342">
    <property type="entry name" value="N-ACETYLGLUTAMATE SYNTHASE"/>
    <property type="match status" value="1"/>
</dbReference>
<dbReference type="PANTHER" id="PTHR23342:SF0">
    <property type="entry name" value="N-ACETYLGLUTAMATE SYNTHASE, MITOCHONDRIAL"/>
    <property type="match status" value="1"/>
</dbReference>
<dbReference type="Pfam" id="PF00696">
    <property type="entry name" value="AA_kinase"/>
    <property type="match status" value="1"/>
</dbReference>
<dbReference type="PIRSF" id="PIRSF000728">
    <property type="entry name" value="NAGK"/>
    <property type="match status" value="1"/>
</dbReference>
<dbReference type="SUPFAM" id="SSF53633">
    <property type="entry name" value="Carbamate kinase-like"/>
    <property type="match status" value="1"/>
</dbReference>